<organism>
    <name type="scientific">Paraburkholderia phymatum (strain DSM 17167 / CIP 108236 / LMG 21445 / STM815)</name>
    <name type="common">Burkholderia phymatum</name>
    <dbReference type="NCBI Taxonomy" id="391038"/>
    <lineage>
        <taxon>Bacteria</taxon>
        <taxon>Pseudomonadati</taxon>
        <taxon>Pseudomonadota</taxon>
        <taxon>Betaproteobacteria</taxon>
        <taxon>Burkholderiales</taxon>
        <taxon>Burkholderiaceae</taxon>
        <taxon>Paraburkholderia</taxon>
    </lineage>
</organism>
<gene>
    <name evidence="1" type="primary">panB</name>
    <name type="ordered locus">Bphy_2494</name>
</gene>
<name>PANB_PARP8</name>
<accession>B2JGD9</accession>
<proteinExistence type="inferred from homology"/>
<sequence length="271" mass="28817">MTYLQETSRSAVTVPKLMAMREAGEKIAMLTCYDASFAALLDRAGVDSLLIGDSLGNVLQGQSTTLPVTLDEIAYHTACVARAKPSALIVSDMPFGTYGTPADAYANAVKLMQSGAQMIKLEGGEWLADTVRFLVERSVPVCAHVGLTPQSVHAFGGFKVQGKTESGAAQLLRDSRAMQDAGAQLLVMEAMPTQLAAEVTKQLRIPTIGIGAGVDCSGQVLVLHDMLGIFPGKRPRFVKDFMQGQPSILAAVEAYVRAVKDGTFPGPEHTF</sequence>
<comment type="function">
    <text evidence="1">Catalyzes the reversible reaction in which hydroxymethyl group from 5,10-methylenetetrahydrofolate is transferred onto alpha-ketoisovalerate to form ketopantoate.</text>
</comment>
<comment type="catalytic activity">
    <reaction evidence="1">
        <text>3-methyl-2-oxobutanoate + (6R)-5,10-methylene-5,6,7,8-tetrahydrofolate + H2O = 2-dehydropantoate + (6S)-5,6,7,8-tetrahydrofolate</text>
        <dbReference type="Rhea" id="RHEA:11824"/>
        <dbReference type="ChEBI" id="CHEBI:11561"/>
        <dbReference type="ChEBI" id="CHEBI:11851"/>
        <dbReference type="ChEBI" id="CHEBI:15377"/>
        <dbReference type="ChEBI" id="CHEBI:15636"/>
        <dbReference type="ChEBI" id="CHEBI:57453"/>
        <dbReference type="EC" id="2.1.2.11"/>
    </reaction>
</comment>
<comment type="cofactor">
    <cofactor evidence="1">
        <name>Mg(2+)</name>
        <dbReference type="ChEBI" id="CHEBI:18420"/>
    </cofactor>
    <text evidence="1">Binds 1 Mg(2+) ion per subunit.</text>
</comment>
<comment type="pathway">
    <text evidence="1">Cofactor biosynthesis; (R)-pantothenate biosynthesis; (R)-pantoate from 3-methyl-2-oxobutanoate: step 1/2.</text>
</comment>
<comment type="subunit">
    <text evidence="1">Homodecamer; pentamer of dimers.</text>
</comment>
<comment type="subcellular location">
    <subcellularLocation>
        <location evidence="1">Cytoplasm</location>
    </subcellularLocation>
</comment>
<comment type="similarity">
    <text evidence="1">Belongs to the PanB family.</text>
</comment>
<protein>
    <recommendedName>
        <fullName evidence="1">3-methyl-2-oxobutanoate hydroxymethyltransferase</fullName>
        <ecNumber evidence="1">2.1.2.11</ecNumber>
    </recommendedName>
    <alternativeName>
        <fullName evidence="1">Ketopantoate hydroxymethyltransferase</fullName>
        <shortName evidence="1">KPHMT</shortName>
    </alternativeName>
</protein>
<dbReference type="EC" id="2.1.2.11" evidence="1"/>
<dbReference type="EMBL" id="CP001043">
    <property type="protein sequence ID" value="ACC71667.1"/>
    <property type="molecule type" value="Genomic_DNA"/>
</dbReference>
<dbReference type="RefSeq" id="WP_012401871.1">
    <property type="nucleotide sequence ID" value="NC_010622.1"/>
</dbReference>
<dbReference type="SMR" id="B2JGD9"/>
<dbReference type="STRING" id="391038.Bphy_2494"/>
<dbReference type="KEGG" id="bph:Bphy_2494"/>
<dbReference type="eggNOG" id="COG0413">
    <property type="taxonomic scope" value="Bacteria"/>
</dbReference>
<dbReference type="HOGENOM" id="CLU_036645_1_0_4"/>
<dbReference type="OrthoDB" id="9781789at2"/>
<dbReference type="UniPathway" id="UPA00028">
    <property type="reaction ID" value="UER00003"/>
</dbReference>
<dbReference type="Proteomes" id="UP000001192">
    <property type="component" value="Chromosome 1"/>
</dbReference>
<dbReference type="GO" id="GO:0005737">
    <property type="term" value="C:cytoplasm"/>
    <property type="evidence" value="ECO:0007669"/>
    <property type="project" value="UniProtKB-SubCell"/>
</dbReference>
<dbReference type="GO" id="GO:0003864">
    <property type="term" value="F:3-methyl-2-oxobutanoate hydroxymethyltransferase activity"/>
    <property type="evidence" value="ECO:0007669"/>
    <property type="project" value="UniProtKB-UniRule"/>
</dbReference>
<dbReference type="GO" id="GO:0000287">
    <property type="term" value="F:magnesium ion binding"/>
    <property type="evidence" value="ECO:0007669"/>
    <property type="project" value="TreeGrafter"/>
</dbReference>
<dbReference type="GO" id="GO:0015940">
    <property type="term" value="P:pantothenate biosynthetic process"/>
    <property type="evidence" value="ECO:0007669"/>
    <property type="project" value="UniProtKB-UniRule"/>
</dbReference>
<dbReference type="CDD" id="cd06557">
    <property type="entry name" value="KPHMT-like"/>
    <property type="match status" value="1"/>
</dbReference>
<dbReference type="FunFam" id="3.20.20.60:FF:000003">
    <property type="entry name" value="3-methyl-2-oxobutanoate hydroxymethyltransferase"/>
    <property type="match status" value="1"/>
</dbReference>
<dbReference type="Gene3D" id="3.20.20.60">
    <property type="entry name" value="Phosphoenolpyruvate-binding domains"/>
    <property type="match status" value="1"/>
</dbReference>
<dbReference type="HAMAP" id="MF_00156">
    <property type="entry name" value="PanB"/>
    <property type="match status" value="1"/>
</dbReference>
<dbReference type="InterPro" id="IPR003700">
    <property type="entry name" value="Pantoate_hydroxy_MeTrfase"/>
</dbReference>
<dbReference type="InterPro" id="IPR015813">
    <property type="entry name" value="Pyrv/PenolPyrv_kinase-like_dom"/>
</dbReference>
<dbReference type="InterPro" id="IPR040442">
    <property type="entry name" value="Pyrv_kinase-like_dom_sf"/>
</dbReference>
<dbReference type="NCBIfam" id="TIGR00222">
    <property type="entry name" value="panB"/>
    <property type="match status" value="1"/>
</dbReference>
<dbReference type="NCBIfam" id="NF001452">
    <property type="entry name" value="PRK00311.1"/>
    <property type="match status" value="1"/>
</dbReference>
<dbReference type="PANTHER" id="PTHR20881">
    <property type="entry name" value="3-METHYL-2-OXOBUTANOATE HYDROXYMETHYLTRANSFERASE"/>
    <property type="match status" value="1"/>
</dbReference>
<dbReference type="PANTHER" id="PTHR20881:SF0">
    <property type="entry name" value="3-METHYL-2-OXOBUTANOATE HYDROXYMETHYLTRANSFERASE"/>
    <property type="match status" value="1"/>
</dbReference>
<dbReference type="Pfam" id="PF02548">
    <property type="entry name" value="Pantoate_transf"/>
    <property type="match status" value="1"/>
</dbReference>
<dbReference type="PIRSF" id="PIRSF000388">
    <property type="entry name" value="Pantoate_hydroxy_MeTrfase"/>
    <property type="match status" value="1"/>
</dbReference>
<dbReference type="SUPFAM" id="SSF51621">
    <property type="entry name" value="Phosphoenolpyruvate/pyruvate domain"/>
    <property type="match status" value="1"/>
</dbReference>
<evidence type="ECO:0000255" key="1">
    <source>
        <dbReference type="HAMAP-Rule" id="MF_00156"/>
    </source>
</evidence>
<reference key="1">
    <citation type="journal article" date="2014" name="Stand. Genomic Sci.">
        <title>Complete genome sequence of Burkholderia phymatum STM815(T), a broad host range and efficient nitrogen-fixing symbiont of Mimosa species.</title>
        <authorList>
            <person name="Moulin L."/>
            <person name="Klonowska A."/>
            <person name="Caroline B."/>
            <person name="Booth K."/>
            <person name="Vriezen J.A."/>
            <person name="Melkonian R."/>
            <person name="James E.K."/>
            <person name="Young J.P."/>
            <person name="Bena G."/>
            <person name="Hauser L."/>
            <person name="Land M."/>
            <person name="Kyrpides N."/>
            <person name="Bruce D."/>
            <person name="Chain P."/>
            <person name="Copeland A."/>
            <person name="Pitluck S."/>
            <person name="Woyke T."/>
            <person name="Lizotte-Waniewski M."/>
            <person name="Bristow J."/>
            <person name="Riley M."/>
        </authorList>
    </citation>
    <scope>NUCLEOTIDE SEQUENCE [LARGE SCALE GENOMIC DNA]</scope>
    <source>
        <strain>DSM 17167 / CIP 108236 / LMG 21445 / STM815</strain>
    </source>
</reference>
<feature type="chain" id="PRO_1000096946" description="3-methyl-2-oxobutanoate hydroxymethyltransferase">
    <location>
        <begin position="1"/>
        <end position="271"/>
    </location>
</feature>
<feature type="active site" description="Proton acceptor" evidence="1">
    <location>
        <position position="189"/>
    </location>
</feature>
<feature type="binding site" evidence="1">
    <location>
        <begin position="53"/>
        <end position="54"/>
    </location>
    <ligand>
        <name>3-methyl-2-oxobutanoate</name>
        <dbReference type="ChEBI" id="CHEBI:11851"/>
    </ligand>
</feature>
<feature type="binding site" evidence="1">
    <location>
        <position position="53"/>
    </location>
    <ligand>
        <name>Mg(2+)</name>
        <dbReference type="ChEBI" id="CHEBI:18420"/>
    </ligand>
</feature>
<feature type="binding site" evidence="1">
    <location>
        <position position="92"/>
    </location>
    <ligand>
        <name>3-methyl-2-oxobutanoate</name>
        <dbReference type="ChEBI" id="CHEBI:11851"/>
    </ligand>
</feature>
<feature type="binding site" evidence="1">
    <location>
        <position position="92"/>
    </location>
    <ligand>
        <name>Mg(2+)</name>
        <dbReference type="ChEBI" id="CHEBI:18420"/>
    </ligand>
</feature>
<feature type="binding site" evidence="1">
    <location>
        <position position="120"/>
    </location>
    <ligand>
        <name>3-methyl-2-oxobutanoate</name>
        <dbReference type="ChEBI" id="CHEBI:11851"/>
    </ligand>
</feature>
<feature type="binding site" evidence="1">
    <location>
        <position position="122"/>
    </location>
    <ligand>
        <name>Mg(2+)</name>
        <dbReference type="ChEBI" id="CHEBI:18420"/>
    </ligand>
</feature>
<keyword id="KW-0963">Cytoplasm</keyword>
<keyword id="KW-0460">Magnesium</keyword>
<keyword id="KW-0479">Metal-binding</keyword>
<keyword id="KW-0566">Pantothenate biosynthesis</keyword>
<keyword id="KW-1185">Reference proteome</keyword>
<keyword id="KW-0808">Transferase</keyword>